<name>EIF3J_HUMAN</name>
<feature type="initiator methionine" description="Removed" evidence="1 8 14 20 21 23 24 25 26">
    <location>
        <position position="1"/>
    </location>
</feature>
<feature type="chain" id="PRO_0000123506" description="Eukaryotic translation initiation factor 3 subunit J">
    <location>
        <begin position="2"/>
        <end position="258"/>
    </location>
</feature>
<feature type="region of interest" description="Disordered" evidence="2">
    <location>
        <begin position="1"/>
        <end position="108"/>
    </location>
</feature>
<feature type="region of interest" description="Sufficient for interaction with EIF3B">
    <location>
        <begin position="2"/>
        <end position="69"/>
    </location>
</feature>
<feature type="region of interest" description="Disordered" evidence="2">
    <location>
        <begin position="217"/>
        <end position="238"/>
    </location>
</feature>
<feature type="region of interest" description="Promotes stable association with the 40S ribosome">
    <location>
        <begin position="243"/>
        <end position="258"/>
    </location>
</feature>
<feature type="coiled-coil region" evidence="1">
    <location>
        <begin position="70"/>
        <end position="135"/>
    </location>
</feature>
<feature type="compositionally biased region" description="Low complexity" evidence="2">
    <location>
        <begin position="1"/>
        <end position="11"/>
    </location>
</feature>
<feature type="compositionally biased region" description="Acidic residues" evidence="2">
    <location>
        <begin position="40"/>
        <end position="59"/>
    </location>
</feature>
<feature type="compositionally biased region" description="Basic and acidic residues" evidence="2">
    <location>
        <begin position="60"/>
        <end position="106"/>
    </location>
</feature>
<feature type="modified residue" description="N-acetylalanine" evidence="1 8 14 20 21 23 24 25 26">
    <location>
        <position position="2"/>
    </location>
</feature>
<feature type="modified residue" description="Phosphoserine" evidence="1 8 23 24 27">
    <location>
        <position position="11"/>
    </location>
</feature>
<feature type="modified residue" description="Phosphoserine" evidence="1 8 23 24">
    <location>
        <position position="13"/>
    </location>
</feature>
<feature type="modified residue" description="Phosphoserine" evidence="1 8">
    <location>
        <position position="20"/>
    </location>
</feature>
<feature type="modified residue" description="Phosphothreonine" evidence="1 8 18 19 23 24 27">
    <location>
        <position position="109"/>
    </location>
</feature>
<feature type="modified residue" description="Phosphoserine" evidence="23 27">
    <location>
        <position position="127"/>
    </location>
</feature>
<feature type="modified residue" description="Phosphotyrosine" evidence="22">
    <location>
        <position position="254"/>
    </location>
</feature>
<feature type="cross-link" description="Glycyl lysine isopeptide (Lys-Gly) (interchain with G-Cter in SUMO2)" evidence="28">
    <location>
        <position position="106"/>
    </location>
</feature>
<feature type="splice variant" id="VSP_054776" description="In isoform 3." evidence="16">
    <location>
        <begin position="50"/>
        <end position="98"/>
    </location>
</feature>
<feature type="splice variant" id="VSP_054593" description="In isoform 2." evidence="15">
    <original>GVNNAVYGIDAMNPSSRDDFTEFGKLLKDKITQYEKSLYYASFLEVLVRDVCISL</original>
    <variation>V</variation>
    <location>
        <begin position="137"/>
        <end position="191"/>
    </location>
</feature>
<feature type="sequence variant" id="VAR_034007" description="In dbSNP:rs2303578." evidence="5">
    <original>A</original>
    <variation>T</variation>
    <location>
        <position position="141"/>
    </location>
</feature>
<feature type="sequence conflict" description="In Ref. 1; AAC78729." evidence="17" ref="1">
    <original>E</original>
    <variation>G</variation>
    <location>
        <position position="40"/>
    </location>
</feature>
<feature type="helix" evidence="30">
    <location>
        <begin position="55"/>
        <end position="64"/>
    </location>
</feature>
<feature type="helix" evidence="30">
    <location>
        <begin position="76"/>
        <end position="95"/>
    </location>
</feature>
<feature type="helix" evidence="30">
    <location>
        <begin position="115"/>
        <end position="134"/>
    </location>
</feature>
<feature type="turn" evidence="29">
    <location>
        <begin position="145"/>
        <end position="147"/>
    </location>
</feature>
<feature type="helix" evidence="29">
    <location>
        <begin position="153"/>
        <end position="167"/>
    </location>
</feature>
<feature type="helix" evidence="29">
    <location>
        <begin position="168"/>
        <end position="170"/>
    </location>
</feature>
<feature type="helix" evidence="29">
    <location>
        <begin position="176"/>
        <end position="188"/>
    </location>
</feature>
<feature type="helix" evidence="29">
    <location>
        <begin position="193"/>
        <end position="212"/>
    </location>
</feature>
<feature type="strand" evidence="30">
    <location>
        <begin position="226"/>
        <end position="229"/>
    </location>
</feature>
<accession>O75822</accession>
<accession>B4DUI3</accession>
<accession>F5H425</accession>
<accession>Q9BUD2</accession>
<accession>Q9H8Q2</accession>
<accession>Q9UI65</accession>
<comment type="function">
    <text evidence="11 12">Component of the eukaryotic translation initiation factor 3 (eIF-3) complex, which is required for several steps in the initiation of protein synthesis (PubMed:25849773, PubMed:27462815). The eIF-3 complex associates with the 40S ribosome and facilitates the recruitment of eIF-1, eIF-1A, eIF-2:GTP:methionyl-tRNAi and eIF-5 to form the 43S pre-initiation complex (43S PIC). The eIF-3 complex stimulates mRNA recruitment to the 43S PIC and scanning of the mRNA for AUG recognition. The eIF-3 complex is also required for disassembly and recycling of post-termination ribosomal complexes and subsequently prevents premature joining of the 40S and 60S ribosomal subunits prior to initiation. The eIF-3 complex specifically targets and initiates translation of a subset of mRNAs involved in cell proliferation, including cell cycling, differentiation and apoptosis, and uses different modes of RNA stem-loop binding to exert either translational activation or repression (PubMed:25849773).</text>
</comment>
<comment type="subunit">
    <text evidence="1 3 4 6 7 8 9 10 13">Component of the eukaryotic translation initiation factor 3 (eIF-3) complex, which is composed of 13 subunits: EIF3A, EIF3B, EIF3C, EIF3D, EIF3E, EIF3F, EIF3G, EIF3H, EIF3I, EIF3J, EIF3K, EIF3L and EIF3M. The eIF-3 complex appears to include 3 stable modules: module A is composed of EIF3A, EIF3B, EIF3G and EIF3I; module B is composed of EIF3F, EIF3H, and EIF3M; and module C is composed of EIF3C, EIF3D, EIF3E, EIF3K and EIF3L. EIF3C of module C binds EIF3B of module A and EIF3H of module B, thereby linking the three modules. EIF3J is a labile subunit that binds to the eIF-3 complex via EIF3B. The eIF-3 complex interacts with RPS6KB1 under conditions of nutrient depletion. Mitogenic stimulation leads to binding and activation of a complex composed of MTOR and RPTOR, leading to phosphorylation and release of RPS6KB1 and binding of EIF4B to eIF-3.</text>
</comment>
<comment type="interaction">
    <interactant intactId="EBI-366647">
        <id>O75822</id>
    </interactant>
    <interactant intactId="EBI-2510446">
        <id>P61221</id>
        <label>ABCE1</label>
    </interactant>
    <organismsDiffer>false</organismsDiffer>
    <experiments>4</experiments>
</comment>
<comment type="interaction">
    <interactant intactId="EBI-366647">
        <id>O75822</id>
    </interactant>
    <interactant intactId="EBI-347804">
        <id>P68400</id>
        <label>CSNK2A1</label>
    </interactant>
    <organismsDiffer>false</organismsDiffer>
    <experiments>5</experiments>
</comment>
<comment type="interaction">
    <interactant intactId="EBI-366647">
        <id>O75822</id>
    </interactant>
    <interactant intactId="EBI-366696">
        <id>P55884</id>
        <label>EIF3B</label>
    </interactant>
    <organismsDiffer>false</organismsDiffer>
    <experiments>6</experiments>
</comment>
<comment type="interaction">
    <interactant intactId="EBI-366647">
        <id>O75822</id>
    </interactant>
    <interactant intactId="EBI-366647">
        <id>O75822</id>
        <label>EIF3J</label>
    </interactant>
    <organismsDiffer>false</organismsDiffer>
    <experiments>3</experiments>
</comment>
<comment type="interaction">
    <interactant intactId="EBI-366647">
        <id>O75822</id>
    </interactant>
    <interactant intactId="EBI-73711">
        <id>Q04637</id>
        <label>EIF4G1</label>
    </interactant>
    <organismsDiffer>false</organismsDiffer>
    <experiments>2</experiments>
</comment>
<comment type="interaction">
    <interactant intactId="EBI-366647">
        <id>O75822</id>
    </interactant>
    <interactant intactId="EBI-2007911">
        <id>Q16236</id>
        <label>NFE2L2</label>
    </interactant>
    <organismsDiffer>false</organismsDiffer>
    <experiments>5</experiments>
</comment>
<comment type="subcellular location">
    <subcellularLocation>
        <location evidence="1">Cytoplasm</location>
    </subcellularLocation>
</comment>
<comment type="alternative products">
    <event type="alternative splicing"/>
    <isoform>
        <id>O75822-1</id>
        <name>1</name>
        <sequence type="displayed"/>
    </isoform>
    <isoform>
        <id>O75822-2</id>
        <name>2</name>
        <sequence type="described" ref="VSP_054593"/>
    </isoform>
    <isoform>
        <id>O75822-3</id>
        <name>3</name>
        <sequence type="described" ref="VSP_054776"/>
    </isoform>
</comment>
<comment type="PTM">
    <text evidence="1 8">Phosphorylated. Phosphorylation is enhanced upon serum stimulation.</text>
</comment>
<comment type="mass spectrometry"/>
<comment type="mass spectrometry"/>
<comment type="similarity">
    <text evidence="1">Belongs to the eIF-3 subunit J family.</text>
</comment>
<protein>
    <recommendedName>
        <fullName evidence="1">Eukaryotic translation initiation factor 3 subunit J</fullName>
        <shortName evidence="1">eIF3j</shortName>
    </recommendedName>
    <alternativeName>
        <fullName evidence="1">Eukaryotic translation initiation factor 3 subunit 1</fullName>
    </alternativeName>
    <alternativeName>
        <fullName evidence="1">eIF-3-alpha</fullName>
    </alternativeName>
    <alternativeName>
        <fullName evidence="1">eIF3 p35</fullName>
    </alternativeName>
</protein>
<dbReference type="EMBL" id="U97670">
    <property type="protein sequence ID" value="AAC78729.1"/>
    <property type="molecule type" value="mRNA"/>
</dbReference>
<dbReference type="EMBL" id="AK023388">
    <property type="protein sequence ID" value="BAB14555.1"/>
    <property type="molecule type" value="mRNA"/>
</dbReference>
<dbReference type="EMBL" id="AK300659">
    <property type="protein sequence ID" value="BAG62345.1"/>
    <property type="molecule type" value="mRNA"/>
</dbReference>
<dbReference type="EMBL" id="CR606839">
    <property type="status" value="NOT_ANNOTATED_CDS"/>
    <property type="molecule type" value="mRNA"/>
</dbReference>
<dbReference type="EMBL" id="AC009996">
    <property type="status" value="NOT_ANNOTATED_CDS"/>
    <property type="molecule type" value="Genomic_DNA"/>
</dbReference>
<dbReference type="EMBL" id="BC002719">
    <property type="protein sequence ID" value="AAH02719.1"/>
    <property type="molecule type" value="mRNA"/>
</dbReference>
<dbReference type="EMBL" id="AF090923">
    <property type="protein sequence ID" value="AAF24039.1"/>
    <property type="molecule type" value="mRNA"/>
</dbReference>
<dbReference type="CCDS" id="CCDS10111.1">
    <molecule id="O75822-1"/>
</dbReference>
<dbReference type="CCDS" id="CCDS61612.1">
    <molecule id="O75822-2"/>
</dbReference>
<dbReference type="CCDS" id="CCDS61613.1">
    <molecule id="O75822-3"/>
</dbReference>
<dbReference type="RefSeq" id="NP_001271264.1">
    <molecule id="O75822-2"/>
    <property type="nucleotide sequence ID" value="NM_001284335.2"/>
</dbReference>
<dbReference type="RefSeq" id="NP_001271265.1">
    <molecule id="O75822-3"/>
    <property type="nucleotide sequence ID" value="NM_001284336.2"/>
</dbReference>
<dbReference type="RefSeq" id="NP_003749.2">
    <molecule id="O75822-1"/>
    <property type="nucleotide sequence ID" value="NM_003758.4"/>
</dbReference>
<dbReference type="PDB" id="2KRB">
    <property type="method" value="NMR"/>
    <property type="chains" value="B=45-55"/>
</dbReference>
<dbReference type="PDB" id="3BPJ">
    <property type="method" value="X-ray"/>
    <property type="resolution" value="1.85 A"/>
    <property type="chains" value="A/B/C/D=141-220"/>
</dbReference>
<dbReference type="PDB" id="6YBW">
    <property type="method" value="EM"/>
    <property type="resolution" value="3.10 A"/>
    <property type="chains" value="z=1-258"/>
</dbReference>
<dbReference type="PDB" id="6ZMW">
    <property type="method" value="EM"/>
    <property type="resolution" value="3.70 A"/>
    <property type="chains" value="z=1-258"/>
</dbReference>
<dbReference type="PDB" id="6ZVJ">
    <property type="method" value="EM"/>
    <property type="resolution" value="3.80 A"/>
    <property type="chains" value="G/J=1-258"/>
</dbReference>
<dbReference type="PDBsum" id="2KRB"/>
<dbReference type="PDBsum" id="3BPJ"/>
<dbReference type="PDBsum" id="6YBW"/>
<dbReference type="PDBsum" id="6ZMW"/>
<dbReference type="PDBsum" id="6ZVJ"/>
<dbReference type="EMDB" id="EMD-10775"/>
<dbReference type="EMDB" id="EMD-11302"/>
<dbReference type="EMDB" id="EMD-11458"/>
<dbReference type="SMR" id="O75822"/>
<dbReference type="BioGRID" id="114218">
    <property type="interactions" value="136"/>
</dbReference>
<dbReference type="ComplexPortal" id="CPX-6036">
    <property type="entry name" value="Eukaryotic translation initiation factor 3 complex"/>
</dbReference>
<dbReference type="CORUM" id="O75822"/>
<dbReference type="DIP" id="DIP-31117N"/>
<dbReference type="FunCoup" id="O75822">
    <property type="interactions" value="1828"/>
</dbReference>
<dbReference type="IntAct" id="O75822">
    <property type="interactions" value="90"/>
</dbReference>
<dbReference type="MINT" id="O75822"/>
<dbReference type="STRING" id="9606.ENSP00000261868"/>
<dbReference type="GlyGen" id="O75822">
    <property type="glycosylation" value="1 site, 1 O-linked glycan (1 site)"/>
</dbReference>
<dbReference type="iPTMnet" id="O75822"/>
<dbReference type="MetOSite" id="O75822"/>
<dbReference type="PhosphoSitePlus" id="O75822"/>
<dbReference type="SwissPalm" id="O75822"/>
<dbReference type="BioMuta" id="EIF3J"/>
<dbReference type="jPOST" id="O75822"/>
<dbReference type="MassIVE" id="O75822"/>
<dbReference type="PaxDb" id="9606-ENSP00000261868"/>
<dbReference type="PeptideAtlas" id="O75822"/>
<dbReference type="ProteomicsDB" id="26447"/>
<dbReference type="ProteomicsDB" id="50215">
    <molecule id="O75822-1"/>
</dbReference>
<dbReference type="ProteomicsDB" id="5189"/>
<dbReference type="Pumba" id="O75822"/>
<dbReference type="Antibodypedia" id="24232">
    <property type="antibodies" value="176 antibodies from 28 providers"/>
</dbReference>
<dbReference type="DNASU" id="8669"/>
<dbReference type="Ensembl" id="ENST00000261868.10">
    <molecule id="O75822-1"/>
    <property type="protein sequence ID" value="ENSP00000261868.5"/>
    <property type="gene ID" value="ENSG00000104131.13"/>
</dbReference>
<dbReference type="Ensembl" id="ENST00000424492.7">
    <molecule id="O75822-3"/>
    <property type="protein sequence ID" value="ENSP00000414548.3"/>
    <property type="gene ID" value="ENSG00000104131.13"/>
</dbReference>
<dbReference type="Ensembl" id="ENST00000535391.5">
    <molecule id="O75822-2"/>
    <property type="protein sequence ID" value="ENSP00000440221.1"/>
    <property type="gene ID" value="ENSG00000104131.13"/>
</dbReference>
<dbReference type="GeneID" id="8669"/>
<dbReference type="KEGG" id="hsa:8669"/>
<dbReference type="MANE-Select" id="ENST00000261868.10">
    <property type="protein sequence ID" value="ENSP00000261868.5"/>
    <property type="RefSeq nucleotide sequence ID" value="NM_003758.4"/>
    <property type="RefSeq protein sequence ID" value="NP_003749.2"/>
</dbReference>
<dbReference type="UCSC" id="uc001ztv.4">
    <molecule id="O75822-1"/>
    <property type="organism name" value="human"/>
</dbReference>
<dbReference type="AGR" id="HGNC:3270"/>
<dbReference type="CTD" id="8669"/>
<dbReference type="DisGeNET" id="8669"/>
<dbReference type="GeneCards" id="EIF3J"/>
<dbReference type="HGNC" id="HGNC:3270">
    <property type="gene designation" value="EIF3J"/>
</dbReference>
<dbReference type="HPA" id="ENSG00000104131">
    <property type="expression patterns" value="Tissue enhanced (skeletal)"/>
</dbReference>
<dbReference type="MIM" id="603910">
    <property type="type" value="gene"/>
</dbReference>
<dbReference type="neXtProt" id="NX_O75822"/>
<dbReference type="OpenTargets" id="ENSG00000104131"/>
<dbReference type="PharmGKB" id="PA162384902"/>
<dbReference type="VEuPathDB" id="HostDB:ENSG00000104131"/>
<dbReference type="eggNOG" id="KOG4813">
    <property type="taxonomic scope" value="Eukaryota"/>
</dbReference>
<dbReference type="GeneTree" id="ENSGT00390000018400"/>
<dbReference type="HOGENOM" id="CLU_085806_2_1_1"/>
<dbReference type="InParanoid" id="O75822"/>
<dbReference type="OMA" id="KPHYALW"/>
<dbReference type="OrthoDB" id="20381at2759"/>
<dbReference type="PAN-GO" id="O75822">
    <property type="GO annotations" value="1 GO annotation based on evolutionary models"/>
</dbReference>
<dbReference type="PhylomeDB" id="O75822"/>
<dbReference type="TreeFam" id="TF101514"/>
<dbReference type="PathwayCommons" id="O75822"/>
<dbReference type="Reactome" id="R-HSA-156827">
    <property type="pathway name" value="L13a-mediated translational silencing of Ceruloplasmin expression"/>
</dbReference>
<dbReference type="Reactome" id="R-HSA-72649">
    <property type="pathway name" value="Translation initiation complex formation"/>
</dbReference>
<dbReference type="Reactome" id="R-HSA-72689">
    <property type="pathway name" value="Formation of a pool of free 40S subunits"/>
</dbReference>
<dbReference type="Reactome" id="R-HSA-72695">
    <property type="pathway name" value="Formation of the ternary complex, and subsequently, the 43S complex"/>
</dbReference>
<dbReference type="Reactome" id="R-HSA-72702">
    <property type="pathway name" value="Ribosomal scanning and start codon recognition"/>
</dbReference>
<dbReference type="Reactome" id="R-HSA-72706">
    <property type="pathway name" value="GTP hydrolysis and joining of the 60S ribosomal subunit"/>
</dbReference>
<dbReference type="SignaLink" id="O75822"/>
<dbReference type="SIGNOR" id="O75822"/>
<dbReference type="BioGRID-ORCS" id="8669">
    <property type="hits" value="475 hits in 1156 CRISPR screens"/>
</dbReference>
<dbReference type="CD-CODE" id="DEE660B4">
    <property type="entry name" value="Stress granule"/>
</dbReference>
<dbReference type="ChiTaRS" id="EIF3J">
    <property type="organism name" value="human"/>
</dbReference>
<dbReference type="EvolutionaryTrace" id="O75822"/>
<dbReference type="GeneWiki" id="EIF3J"/>
<dbReference type="GenomeRNAi" id="8669"/>
<dbReference type="Pharos" id="O75822">
    <property type="development level" value="Tbio"/>
</dbReference>
<dbReference type="PRO" id="PR:O75822"/>
<dbReference type="Proteomes" id="UP000005640">
    <property type="component" value="Chromosome 15"/>
</dbReference>
<dbReference type="RNAct" id="O75822">
    <property type="molecule type" value="protein"/>
</dbReference>
<dbReference type="Bgee" id="ENSG00000104131">
    <property type="expression patterns" value="Expressed in gastrocnemius and 205 other cell types or tissues"/>
</dbReference>
<dbReference type="ExpressionAtlas" id="O75822">
    <property type="expression patterns" value="baseline and differential"/>
</dbReference>
<dbReference type="GO" id="GO:0005829">
    <property type="term" value="C:cytosol"/>
    <property type="evidence" value="ECO:0000314"/>
    <property type="project" value="HPA"/>
</dbReference>
<dbReference type="GO" id="GO:0016282">
    <property type="term" value="C:eukaryotic 43S preinitiation complex"/>
    <property type="evidence" value="ECO:0007669"/>
    <property type="project" value="UniProtKB-UniRule"/>
</dbReference>
<dbReference type="GO" id="GO:0033290">
    <property type="term" value="C:eukaryotic 48S preinitiation complex"/>
    <property type="evidence" value="ECO:0007669"/>
    <property type="project" value="UniProtKB-UniRule"/>
</dbReference>
<dbReference type="GO" id="GO:0005852">
    <property type="term" value="C:eukaryotic translation initiation factor 3 complex"/>
    <property type="evidence" value="ECO:0000314"/>
    <property type="project" value="UniProtKB"/>
</dbReference>
<dbReference type="GO" id="GO:0042802">
    <property type="term" value="F:identical protein binding"/>
    <property type="evidence" value="ECO:0000353"/>
    <property type="project" value="IntAct"/>
</dbReference>
<dbReference type="GO" id="GO:0003743">
    <property type="term" value="F:translation initiation factor activity"/>
    <property type="evidence" value="ECO:0007669"/>
    <property type="project" value="UniProtKB-UniRule"/>
</dbReference>
<dbReference type="GO" id="GO:0001732">
    <property type="term" value="P:formation of cytoplasmic translation initiation complex"/>
    <property type="evidence" value="ECO:0000303"/>
    <property type="project" value="ComplexPortal"/>
</dbReference>
<dbReference type="GO" id="GO:0006413">
    <property type="term" value="P:translational initiation"/>
    <property type="evidence" value="ECO:0000305"/>
    <property type="project" value="UniProtKB"/>
</dbReference>
<dbReference type="FunFam" id="1.10.246.60:FF:000001">
    <property type="entry name" value="Eukaryotic translation initiation factor 3 subunit J"/>
    <property type="match status" value="1"/>
</dbReference>
<dbReference type="Gene3D" id="1.10.246.60">
    <property type="entry name" value="Eukaryotic translation initiation factor 3 like domains"/>
    <property type="match status" value="1"/>
</dbReference>
<dbReference type="HAMAP" id="MF_03009">
    <property type="entry name" value="eIF3j"/>
    <property type="match status" value="1"/>
</dbReference>
<dbReference type="InterPro" id="IPR023194">
    <property type="entry name" value="eIF3-like_dom_sf"/>
</dbReference>
<dbReference type="InterPro" id="IPR013906">
    <property type="entry name" value="eIF3j"/>
</dbReference>
<dbReference type="PANTHER" id="PTHR21681">
    <property type="entry name" value="EUKARYOTIC TRANSLATION INITIATION FACTOR 3 SUBUNIT J"/>
    <property type="match status" value="1"/>
</dbReference>
<dbReference type="PANTHER" id="PTHR21681:SF0">
    <property type="entry name" value="EUKARYOTIC TRANSLATION INITIATION FACTOR 3 SUBUNIT J"/>
    <property type="match status" value="1"/>
</dbReference>
<dbReference type="Pfam" id="PF08597">
    <property type="entry name" value="eIF3_subunit"/>
    <property type="match status" value="1"/>
</dbReference>
<sequence>MAAAAAAAGDSDSWDADAFSVEDPVRKVGGGGTAGGDRWEGEDEDEDVKDNWDDDDDEKKEEAEVKPEVKISEKKKIAEKIKEKERQQKKRQEEIKKRLEEPEEPKVLTPEEQLADKLRLKKLQEESDLELAKETFGVNNAVYGIDAMNPSSRDDFTEFGKLLKDKITQYEKSLYYASFLEVLVRDVCISLEIDDLKKITNSLTVLCSEKQKQEKQSKAKKKKKGVVPGGGLKATMKDDLADYGGYDGGYVQDYEDFM</sequence>
<evidence type="ECO:0000255" key="1">
    <source>
        <dbReference type="HAMAP-Rule" id="MF_03009"/>
    </source>
</evidence>
<evidence type="ECO:0000256" key="2">
    <source>
        <dbReference type="SAM" id="MobiDB-lite"/>
    </source>
</evidence>
<evidence type="ECO:0000269" key="3">
    <source>
    </source>
</evidence>
<evidence type="ECO:0000269" key="4">
    <source>
    </source>
</evidence>
<evidence type="ECO:0000269" key="5">
    <source>
    </source>
</evidence>
<evidence type="ECO:0000269" key="6">
    <source>
    </source>
</evidence>
<evidence type="ECO:0000269" key="7">
    <source>
    </source>
</evidence>
<evidence type="ECO:0000269" key="8">
    <source>
    </source>
</evidence>
<evidence type="ECO:0000269" key="9">
    <source>
    </source>
</evidence>
<evidence type="ECO:0000269" key="10">
    <source>
    </source>
</evidence>
<evidence type="ECO:0000269" key="11">
    <source>
    </source>
</evidence>
<evidence type="ECO:0000269" key="12">
    <source>
    </source>
</evidence>
<evidence type="ECO:0000269" key="13">
    <source>
    </source>
</evidence>
<evidence type="ECO:0000269" key="14">
    <source ref="6"/>
</evidence>
<evidence type="ECO:0000303" key="15">
    <source>
    </source>
</evidence>
<evidence type="ECO:0000303" key="16">
    <source ref="3"/>
</evidence>
<evidence type="ECO:0000305" key="17"/>
<evidence type="ECO:0007744" key="18">
    <source>
    </source>
</evidence>
<evidence type="ECO:0007744" key="19">
    <source>
    </source>
</evidence>
<evidence type="ECO:0007744" key="20">
    <source>
    </source>
</evidence>
<evidence type="ECO:0007744" key="21">
    <source>
    </source>
</evidence>
<evidence type="ECO:0007744" key="22">
    <source>
    </source>
</evidence>
<evidence type="ECO:0007744" key="23">
    <source>
    </source>
</evidence>
<evidence type="ECO:0007744" key="24">
    <source>
    </source>
</evidence>
<evidence type="ECO:0007744" key="25">
    <source>
    </source>
</evidence>
<evidence type="ECO:0007744" key="26">
    <source>
    </source>
</evidence>
<evidence type="ECO:0007744" key="27">
    <source>
    </source>
</evidence>
<evidence type="ECO:0007744" key="28">
    <source>
    </source>
</evidence>
<evidence type="ECO:0007829" key="29">
    <source>
        <dbReference type="PDB" id="3BPJ"/>
    </source>
</evidence>
<evidence type="ECO:0007829" key="30">
    <source>
        <dbReference type="PDB" id="6YBW"/>
    </source>
</evidence>
<organism>
    <name type="scientific">Homo sapiens</name>
    <name type="common">Human</name>
    <dbReference type="NCBI Taxonomy" id="9606"/>
    <lineage>
        <taxon>Eukaryota</taxon>
        <taxon>Metazoa</taxon>
        <taxon>Chordata</taxon>
        <taxon>Craniata</taxon>
        <taxon>Vertebrata</taxon>
        <taxon>Euteleostomi</taxon>
        <taxon>Mammalia</taxon>
        <taxon>Eutheria</taxon>
        <taxon>Euarchontoglires</taxon>
        <taxon>Primates</taxon>
        <taxon>Haplorrhini</taxon>
        <taxon>Catarrhini</taxon>
        <taxon>Hominidae</taxon>
        <taxon>Homo</taxon>
    </lineage>
</organism>
<reference key="1">
    <citation type="journal article" date="1998" name="J. Biol. Chem.">
        <title>Characterization of cDNAs encoding the p44 and p35 subunits of human translation initiation factor eIF3.</title>
        <authorList>
            <person name="Block K.L."/>
            <person name="Vornlocher H.-P."/>
            <person name="Hershey J.W.B."/>
        </authorList>
    </citation>
    <scope>NUCLEOTIDE SEQUENCE [MRNA] (ISOFORM 1)</scope>
    <scope>PARTIAL PROTEIN SEQUENCE</scope>
    <scope>INTERACTION WITH EIF3A</scope>
</reference>
<reference key="2">
    <citation type="journal article" date="2004" name="Nat. Genet.">
        <title>Complete sequencing and characterization of 21,243 full-length human cDNAs.</title>
        <authorList>
            <person name="Ota T."/>
            <person name="Suzuki Y."/>
            <person name="Nishikawa T."/>
            <person name="Otsuki T."/>
            <person name="Sugiyama T."/>
            <person name="Irie R."/>
            <person name="Wakamatsu A."/>
            <person name="Hayashi K."/>
            <person name="Sato H."/>
            <person name="Nagai K."/>
            <person name="Kimura K."/>
            <person name="Makita H."/>
            <person name="Sekine M."/>
            <person name="Obayashi M."/>
            <person name="Nishi T."/>
            <person name="Shibahara T."/>
            <person name="Tanaka T."/>
            <person name="Ishii S."/>
            <person name="Yamamoto J."/>
            <person name="Saito K."/>
            <person name="Kawai Y."/>
            <person name="Isono Y."/>
            <person name="Nakamura Y."/>
            <person name="Nagahari K."/>
            <person name="Murakami K."/>
            <person name="Yasuda T."/>
            <person name="Iwayanagi T."/>
            <person name="Wagatsuma M."/>
            <person name="Shiratori A."/>
            <person name="Sudo H."/>
            <person name="Hosoiri T."/>
            <person name="Kaku Y."/>
            <person name="Kodaira H."/>
            <person name="Kondo H."/>
            <person name="Sugawara M."/>
            <person name="Takahashi M."/>
            <person name="Kanda K."/>
            <person name="Yokoi T."/>
            <person name="Furuya T."/>
            <person name="Kikkawa E."/>
            <person name="Omura Y."/>
            <person name="Abe K."/>
            <person name="Kamihara K."/>
            <person name="Katsuta N."/>
            <person name="Sato K."/>
            <person name="Tanikawa M."/>
            <person name="Yamazaki M."/>
            <person name="Ninomiya K."/>
            <person name="Ishibashi T."/>
            <person name="Yamashita H."/>
            <person name="Murakawa K."/>
            <person name="Fujimori K."/>
            <person name="Tanai H."/>
            <person name="Kimata M."/>
            <person name="Watanabe M."/>
            <person name="Hiraoka S."/>
            <person name="Chiba Y."/>
            <person name="Ishida S."/>
            <person name="Ono Y."/>
            <person name="Takiguchi S."/>
            <person name="Watanabe S."/>
            <person name="Yosida M."/>
            <person name="Hotuta T."/>
            <person name="Kusano J."/>
            <person name="Kanehori K."/>
            <person name="Takahashi-Fujii A."/>
            <person name="Hara H."/>
            <person name="Tanase T.-O."/>
            <person name="Nomura Y."/>
            <person name="Togiya S."/>
            <person name="Komai F."/>
            <person name="Hara R."/>
            <person name="Takeuchi K."/>
            <person name="Arita M."/>
            <person name="Imose N."/>
            <person name="Musashino K."/>
            <person name="Yuuki H."/>
            <person name="Oshima A."/>
            <person name="Sasaki N."/>
            <person name="Aotsuka S."/>
            <person name="Yoshikawa Y."/>
            <person name="Matsunawa H."/>
            <person name="Ichihara T."/>
            <person name="Shiohata N."/>
            <person name="Sano S."/>
            <person name="Moriya S."/>
            <person name="Momiyama H."/>
            <person name="Satoh N."/>
            <person name="Takami S."/>
            <person name="Terashima Y."/>
            <person name="Suzuki O."/>
            <person name="Nakagawa S."/>
            <person name="Senoh A."/>
            <person name="Mizoguchi H."/>
            <person name="Goto Y."/>
            <person name="Shimizu F."/>
            <person name="Wakebe H."/>
            <person name="Hishigaki H."/>
            <person name="Watanabe T."/>
            <person name="Sugiyama A."/>
            <person name="Takemoto M."/>
            <person name="Kawakami B."/>
            <person name="Yamazaki M."/>
            <person name="Watanabe K."/>
            <person name="Kumagai A."/>
            <person name="Itakura S."/>
            <person name="Fukuzumi Y."/>
            <person name="Fujimori Y."/>
            <person name="Komiyama M."/>
            <person name="Tashiro H."/>
            <person name="Tanigami A."/>
            <person name="Fujiwara T."/>
            <person name="Ono T."/>
            <person name="Yamada K."/>
            <person name="Fujii Y."/>
            <person name="Ozaki K."/>
            <person name="Hirao M."/>
            <person name="Ohmori Y."/>
            <person name="Kawabata A."/>
            <person name="Hikiji T."/>
            <person name="Kobatake N."/>
            <person name="Inagaki H."/>
            <person name="Ikema Y."/>
            <person name="Okamoto S."/>
            <person name="Okitani R."/>
            <person name="Kawakami T."/>
            <person name="Noguchi S."/>
            <person name="Itoh T."/>
            <person name="Shigeta K."/>
            <person name="Senba T."/>
            <person name="Matsumura K."/>
            <person name="Nakajima Y."/>
            <person name="Mizuno T."/>
            <person name="Morinaga M."/>
            <person name="Sasaki M."/>
            <person name="Togashi T."/>
            <person name="Oyama M."/>
            <person name="Hata H."/>
            <person name="Watanabe M."/>
            <person name="Komatsu T."/>
            <person name="Mizushima-Sugano J."/>
            <person name="Satoh T."/>
            <person name="Shirai Y."/>
            <person name="Takahashi Y."/>
            <person name="Nakagawa K."/>
            <person name="Okumura K."/>
            <person name="Nagase T."/>
            <person name="Nomura N."/>
            <person name="Kikuchi H."/>
            <person name="Masuho Y."/>
            <person name="Yamashita R."/>
            <person name="Nakai K."/>
            <person name="Yada T."/>
            <person name="Nakamura Y."/>
            <person name="Ohara O."/>
            <person name="Isogai T."/>
            <person name="Sugano S."/>
        </authorList>
    </citation>
    <scope>NUCLEOTIDE SEQUENCE [LARGE SCALE MRNA] (ISOFORMS 1 AND 2)</scope>
    <scope>VARIANT THR-141</scope>
    <source>
        <tissue>Ovarian carcinoma</tissue>
        <tissue>Skeletal muscle</tissue>
    </source>
</reference>
<reference key="3">
    <citation type="submission" date="2004-07" db="EMBL/GenBank/DDBJ databases">
        <authorList>
            <person name="Li W.B."/>
            <person name="Gruber C."/>
            <person name="Jessee J."/>
            <person name="Polayes D."/>
        </authorList>
    </citation>
    <scope>NUCLEOTIDE SEQUENCE [LARGE SCALE MRNA] (ISOFORM 3)</scope>
    <source>
        <tissue>Fetal brain</tissue>
    </source>
</reference>
<reference key="4">
    <citation type="journal article" date="2006" name="Nature">
        <title>Analysis of the DNA sequence and duplication history of human chromosome 15.</title>
        <authorList>
            <person name="Zody M.C."/>
            <person name="Garber M."/>
            <person name="Sharpe T."/>
            <person name="Young S.K."/>
            <person name="Rowen L."/>
            <person name="O'Neill K."/>
            <person name="Whittaker C.A."/>
            <person name="Kamal M."/>
            <person name="Chang J.L."/>
            <person name="Cuomo C.A."/>
            <person name="Dewar K."/>
            <person name="FitzGerald M.G."/>
            <person name="Kodira C.D."/>
            <person name="Madan A."/>
            <person name="Qin S."/>
            <person name="Yang X."/>
            <person name="Abbasi N."/>
            <person name="Abouelleil A."/>
            <person name="Arachchi H.M."/>
            <person name="Baradarani L."/>
            <person name="Birditt B."/>
            <person name="Bloom S."/>
            <person name="Bloom T."/>
            <person name="Borowsky M.L."/>
            <person name="Burke J."/>
            <person name="Butler J."/>
            <person name="Cook A."/>
            <person name="DeArellano K."/>
            <person name="DeCaprio D."/>
            <person name="Dorris L. III"/>
            <person name="Dors M."/>
            <person name="Eichler E.E."/>
            <person name="Engels R."/>
            <person name="Fahey J."/>
            <person name="Fleetwood P."/>
            <person name="Friedman C."/>
            <person name="Gearin G."/>
            <person name="Hall J.L."/>
            <person name="Hensley G."/>
            <person name="Johnson E."/>
            <person name="Jones C."/>
            <person name="Kamat A."/>
            <person name="Kaur A."/>
            <person name="Locke D.P."/>
            <person name="Madan A."/>
            <person name="Munson G."/>
            <person name="Jaffe D.B."/>
            <person name="Lui A."/>
            <person name="Macdonald P."/>
            <person name="Mauceli E."/>
            <person name="Naylor J.W."/>
            <person name="Nesbitt R."/>
            <person name="Nicol R."/>
            <person name="O'Leary S.B."/>
            <person name="Ratcliffe A."/>
            <person name="Rounsley S."/>
            <person name="She X."/>
            <person name="Sneddon K.M.B."/>
            <person name="Stewart S."/>
            <person name="Sougnez C."/>
            <person name="Stone S.M."/>
            <person name="Topham K."/>
            <person name="Vincent D."/>
            <person name="Wang S."/>
            <person name="Zimmer A.R."/>
            <person name="Birren B.W."/>
            <person name="Hood L."/>
            <person name="Lander E.S."/>
            <person name="Nusbaum C."/>
        </authorList>
    </citation>
    <scope>NUCLEOTIDE SEQUENCE [LARGE SCALE GENOMIC DNA]</scope>
</reference>
<reference key="5">
    <citation type="journal article" date="2004" name="Genome Res.">
        <title>The status, quality, and expansion of the NIH full-length cDNA project: the Mammalian Gene Collection (MGC).</title>
        <authorList>
            <consortium name="The MGC Project Team"/>
        </authorList>
    </citation>
    <scope>NUCLEOTIDE SEQUENCE [LARGE SCALE MRNA] (ISOFORM 1)</scope>
    <source>
        <tissue>Uterus</tissue>
    </source>
</reference>
<reference key="6">
    <citation type="submission" date="2008-03" db="UniProtKB">
        <authorList>
            <person name="Bienvenut W.V."/>
            <person name="Vousden K.H."/>
            <person name="Lukashchuk N."/>
        </authorList>
    </citation>
    <scope>PROTEIN SEQUENCE OF 2-27; 99-119; 123-133 AND 199-210</scope>
    <scope>CLEAVAGE OF INITIATOR METHIONINE</scope>
    <scope>ACETYLATION AT ALA-2</scope>
    <scope>IDENTIFICATION BY MASS SPECTROMETRY</scope>
    <source>
        <tissue>Lung carcinoma</tissue>
    </source>
</reference>
<reference key="7">
    <citation type="submission" date="1998-09" db="EMBL/GenBank/DDBJ databases">
        <title>Functional prediction of the coding sequences of 50 new genes deduced by analysis of cDNA clones from human fetal liver.</title>
        <authorList>
            <person name="Yu Y."/>
            <person name="Zhang C."/>
            <person name="Luo L."/>
            <person name="Ouyang S."/>
            <person name="Zhang S."/>
            <person name="Li W."/>
            <person name="Wu J."/>
            <person name="Zhou S."/>
            <person name="Liu M."/>
            <person name="He F."/>
        </authorList>
    </citation>
    <scope>NUCLEOTIDE SEQUENCE [LARGE SCALE MRNA] OF 148-258 (ISOFORM 1)</scope>
    <source>
        <tissue>Fetal liver</tissue>
    </source>
</reference>
<reference key="8">
    <citation type="journal article" date="2003" name="Eur. J. Biochem.">
        <title>Characterization of eIF3k: a newly discovered subunit of mammalian translation initiation factor eIF3.</title>
        <authorList>
            <person name="Mayeur G.L."/>
            <person name="Fraser C.S."/>
            <person name="Peiretti F."/>
            <person name="Block K.L."/>
            <person name="Hershey J.W.B."/>
        </authorList>
    </citation>
    <scope>INTERACTION WITH EIF3K</scope>
</reference>
<reference key="9">
    <citation type="journal article" date="2004" name="J. Biol. Chem.">
        <title>The j-subunit of human translation initiation factor eIF3 is required for the stable binding of eIF3 and its subcomplexes to 40 S ribosomal subunits in vitro.</title>
        <authorList>
            <person name="Fraser C.S."/>
            <person name="Lee J.Y."/>
            <person name="Mayeur G.L."/>
            <person name="Bushell M."/>
            <person name="Doudna J.A."/>
            <person name="Hershey J.W.B."/>
        </authorList>
    </citation>
    <scope>INTERACTION WITH EIF3B AND THE 40S RIBOSOMAL SUBUNIT</scope>
</reference>
<reference key="10">
    <citation type="journal article" date="2005" name="RNA">
        <title>Binding of eukaryotic initiation factor 3 to ribosomal 40S subunits and its role in ribosomal dissociation and anti-association.</title>
        <authorList>
            <person name="Kolupaeva V.G."/>
            <person name="Unbehaun A."/>
            <person name="Lomakin I.B."/>
            <person name="Hellen C.U.T."/>
            <person name="Pestova T.V."/>
        </authorList>
    </citation>
    <scope>CHARACTERIZATION OF THE EIF-3 COMPLEX</scope>
</reference>
<reference key="11">
    <citation type="journal article" date="2006" name="Cell">
        <title>Global, in vivo, and site-specific phosphorylation dynamics in signaling networks.</title>
        <authorList>
            <person name="Olsen J.V."/>
            <person name="Blagoev B."/>
            <person name="Gnad F."/>
            <person name="Macek B."/>
            <person name="Kumar C."/>
            <person name="Mortensen P."/>
            <person name="Mann M."/>
        </authorList>
    </citation>
    <scope>IDENTIFICATION BY MASS SPECTROMETRY [LARGE SCALE ANALYSIS]</scope>
    <source>
        <tissue>Cervix carcinoma</tissue>
    </source>
</reference>
<reference key="12">
    <citation type="journal article" date="2006" name="J. Biol. Chem.">
        <title>Translation initiation factor eIF4G-1 binds to eIF3 through the eIF3e subunit.</title>
        <authorList>
            <person name="LeFebvre A.K."/>
            <person name="Korneeva N.L."/>
            <person name="Trutschl M."/>
            <person name="Cvek U."/>
            <person name="Duzan R.D."/>
            <person name="Bradley C.A."/>
            <person name="Hershey J.W.B."/>
            <person name="Rhoads R.E."/>
        </authorList>
    </citation>
    <scope>IDENTIFICATION IN THE EIF-3 COMPLEX</scope>
    <scope>IDENTIFICATION BY MASS SPECTROMETRY</scope>
</reference>
<reference key="13">
    <citation type="journal article" date="2006" name="Nat. Biotechnol.">
        <title>A probability-based approach for high-throughput protein phosphorylation analysis and site localization.</title>
        <authorList>
            <person name="Beausoleil S.A."/>
            <person name="Villen J."/>
            <person name="Gerber S.A."/>
            <person name="Rush J."/>
            <person name="Gygi S.P."/>
        </authorList>
    </citation>
    <scope>PHOSPHORYLATION [LARGE SCALE ANALYSIS] AT THR-109</scope>
    <scope>IDENTIFICATION BY MASS SPECTROMETRY [LARGE SCALE ANALYSIS]</scope>
    <source>
        <tissue>Cervix carcinoma</tissue>
    </source>
</reference>
<reference key="14">
    <citation type="journal article" date="2007" name="J. Biol. Chem.">
        <title>Structure of eIF3b RNA recognition motif and its interaction with eIF3j: structural insights into the recruitment of eIF3b to the 40 S ribosomal subunit.</title>
        <authorList>
            <person name="ElAntak L."/>
            <person name="Tzakos A.G."/>
            <person name="Locker N."/>
            <person name="Lukavsky P.J."/>
        </authorList>
    </citation>
    <scope>INTERACTION WITH EIF3B AND THE 40S RIBOSOMAL SUBUNIT</scope>
</reference>
<reference key="15">
    <citation type="journal article" date="2007" name="J. Proteome Res.">
        <title>Improved titanium dioxide enrichment of phosphopeptides from HeLa cells and high confident phosphopeptide identification by cross-validation of MS/MS and MS/MS/MS spectra.</title>
        <authorList>
            <person name="Yu L.R."/>
            <person name="Zhu Z."/>
            <person name="Chan K.C."/>
            <person name="Issaq H.J."/>
            <person name="Dimitrov D.S."/>
            <person name="Veenstra T.D."/>
        </authorList>
    </citation>
    <scope>PHOSPHORYLATION [LARGE SCALE ANALYSIS] AT THR-109</scope>
    <scope>IDENTIFICATION BY MASS SPECTROMETRY [LARGE SCALE ANALYSIS]</scope>
    <source>
        <tissue>Cervix carcinoma</tissue>
    </source>
</reference>
<reference key="16">
    <citation type="journal article" date="2007" name="Mol. Cell">
        <title>eIF3j is located in the decoding center of the human 40S ribosomal subunit.</title>
        <authorList>
            <person name="Fraser C.S."/>
            <person name="Berry K.E."/>
            <person name="Hershey J.W.B."/>
            <person name="Doudna J.A."/>
        </authorList>
    </citation>
    <scope>INTERACTION WITH THE 40S RIBOSOMAL SUBUNIT</scope>
</reference>
<reference key="17">
    <citation type="journal article" date="2007" name="Mol. Cell. Proteomics">
        <title>Structural characterization of the human eukaryotic initiation factor 3 protein complex by mass spectrometry.</title>
        <authorList>
            <person name="Damoc E."/>
            <person name="Fraser C.S."/>
            <person name="Zhou M."/>
            <person name="Videler H."/>
            <person name="Mayeur G.L."/>
            <person name="Hershey J.W.B."/>
            <person name="Doudna J.A."/>
            <person name="Robinson C.V."/>
            <person name="Leary J.A."/>
        </authorList>
    </citation>
    <scope>IDENTIFICATION IN THE EIF-3 COMPLEX</scope>
    <scope>CHARACTERIZATION OF THE EIF-3 COMPLEX</scope>
    <scope>CLEAVAGE OF INITIATOR METHIONINE</scope>
    <scope>ACETYLATION AT ALA-2</scope>
    <scope>PHOSPHORYLATION AT SER-11; SER-13; SER-20 AND THR-109</scope>
    <scope>MASS SPECTROMETRY</scope>
</reference>
<reference key="18">
    <citation type="journal article" date="2008" name="Proc. Natl. Acad. Sci. U.S.A.">
        <title>A quantitative atlas of mitotic phosphorylation.</title>
        <authorList>
            <person name="Dephoure N."/>
            <person name="Zhou C."/>
            <person name="Villen J."/>
            <person name="Beausoleil S.A."/>
            <person name="Bakalarski C.E."/>
            <person name="Elledge S.J."/>
            <person name="Gygi S.P."/>
        </authorList>
    </citation>
    <scope>IDENTIFICATION BY MASS SPECTROMETRY [LARGE SCALE ANALYSIS]</scope>
    <source>
        <tissue>Cervix carcinoma</tissue>
    </source>
</reference>
<reference key="19">
    <citation type="journal article" date="2008" name="Proc. Natl. Acad. Sci. U.S.A.">
        <title>Mass spectrometry reveals modularity and a complete subunit interaction map of the eukaryotic translation factor eIF3.</title>
        <authorList>
            <person name="Zhou M."/>
            <person name="Sandercock A.M."/>
            <person name="Fraser C.S."/>
            <person name="Ridlova G."/>
            <person name="Stephens E."/>
            <person name="Schenauer M.R."/>
            <person name="Yokoi-Fong T."/>
            <person name="Barsky D."/>
            <person name="Leary J.A."/>
            <person name="Hershey J.W.B."/>
            <person name="Doudna J.A."/>
            <person name="Robinson C.V."/>
        </authorList>
    </citation>
    <scope>IDENTIFICATION IN THE EIF-3 COMPLEX</scope>
    <scope>CHARACTERIZATION OF THE EIF-3 COMPLEX</scope>
    <scope>MASS SPECTROMETRY</scope>
</reference>
<reference key="20">
    <citation type="journal article" date="2009" name="Anal. Chem.">
        <title>Lys-N and trypsin cover complementary parts of the phosphoproteome in a refined SCX-based approach.</title>
        <authorList>
            <person name="Gauci S."/>
            <person name="Helbig A.O."/>
            <person name="Slijper M."/>
            <person name="Krijgsveld J."/>
            <person name="Heck A.J."/>
            <person name="Mohammed S."/>
        </authorList>
    </citation>
    <scope>ACETYLATION [LARGE SCALE ANALYSIS] AT ALA-2</scope>
    <scope>CLEAVAGE OF INITIATOR METHIONINE [LARGE SCALE ANALYSIS]</scope>
    <scope>IDENTIFICATION BY MASS SPECTROMETRY [LARGE SCALE ANALYSIS]</scope>
</reference>
<reference key="21">
    <citation type="journal article" date="2009" name="Mol. Cell. Proteomics">
        <title>Large-scale proteomics analysis of the human kinome.</title>
        <authorList>
            <person name="Oppermann F.S."/>
            <person name="Gnad F."/>
            <person name="Olsen J.V."/>
            <person name="Hornberger R."/>
            <person name="Greff Z."/>
            <person name="Keri G."/>
            <person name="Mann M."/>
            <person name="Daub H."/>
        </authorList>
    </citation>
    <scope>ACETYLATION [LARGE SCALE ANALYSIS] AT ALA-2</scope>
    <scope>CLEAVAGE OF INITIATOR METHIONINE [LARGE SCALE ANALYSIS]</scope>
    <scope>IDENTIFICATION BY MASS SPECTROMETRY [LARGE SCALE ANALYSIS]</scope>
</reference>
<reference key="22">
    <citation type="journal article" date="2009" name="Sci. Signal.">
        <title>Quantitative phosphoproteomic analysis of T cell receptor signaling reveals system-wide modulation of protein-protein interactions.</title>
        <authorList>
            <person name="Mayya V."/>
            <person name="Lundgren D.H."/>
            <person name="Hwang S.-I."/>
            <person name="Rezaul K."/>
            <person name="Wu L."/>
            <person name="Eng J.K."/>
            <person name="Rodionov V."/>
            <person name="Han D.K."/>
        </authorList>
    </citation>
    <scope>PHOSPHORYLATION [LARGE SCALE ANALYSIS] AT TYR-254</scope>
    <scope>IDENTIFICATION BY MASS SPECTROMETRY [LARGE SCALE ANALYSIS]</scope>
    <source>
        <tissue>Leukemic T-cell</tissue>
    </source>
</reference>
<reference key="23">
    <citation type="journal article" date="2010" name="Sci. Signal.">
        <title>Quantitative phosphoproteomics reveals widespread full phosphorylation site occupancy during mitosis.</title>
        <authorList>
            <person name="Olsen J.V."/>
            <person name="Vermeulen M."/>
            <person name="Santamaria A."/>
            <person name="Kumar C."/>
            <person name="Miller M.L."/>
            <person name="Jensen L.J."/>
            <person name="Gnad F."/>
            <person name="Cox J."/>
            <person name="Jensen T.S."/>
            <person name="Nigg E.A."/>
            <person name="Brunak S."/>
            <person name="Mann M."/>
        </authorList>
    </citation>
    <scope>ACETYLATION [LARGE SCALE ANALYSIS] AT ALA-2</scope>
    <scope>PHOSPHORYLATION [LARGE SCALE ANALYSIS] AT SER-11; SER-13; THR-109 AND SER-127</scope>
    <scope>CLEAVAGE OF INITIATOR METHIONINE [LARGE SCALE ANALYSIS]</scope>
    <scope>IDENTIFICATION BY MASS SPECTROMETRY [LARGE SCALE ANALYSIS]</scope>
    <source>
        <tissue>Cervix carcinoma</tissue>
    </source>
</reference>
<reference key="24">
    <citation type="journal article" date="2011" name="BMC Syst. Biol.">
        <title>Initial characterization of the human central proteome.</title>
        <authorList>
            <person name="Burkard T.R."/>
            <person name="Planyavsky M."/>
            <person name="Kaupe I."/>
            <person name="Breitwieser F.P."/>
            <person name="Buerckstuemmer T."/>
            <person name="Bennett K.L."/>
            <person name="Superti-Furga G."/>
            <person name="Colinge J."/>
        </authorList>
    </citation>
    <scope>IDENTIFICATION BY MASS SPECTROMETRY [LARGE SCALE ANALYSIS]</scope>
</reference>
<reference key="25">
    <citation type="journal article" date="2011" name="Sci. Signal.">
        <title>System-wide temporal characterization of the proteome and phosphoproteome of human embryonic stem cell differentiation.</title>
        <authorList>
            <person name="Rigbolt K.T."/>
            <person name="Prokhorova T.A."/>
            <person name="Akimov V."/>
            <person name="Henningsen J."/>
            <person name="Johansen P.T."/>
            <person name="Kratchmarova I."/>
            <person name="Kassem M."/>
            <person name="Mann M."/>
            <person name="Olsen J.V."/>
            <person name="Blagoev B."/>
        </authorList>
    </citation>
    <scope>ACETYLATION [LARGE SCALE ANALYSIS] AT ALA-2</scope>
    <scope>PHOSPHORYLATION [LARGE SCALE ANALYSIS] AT SER-11; SER-13 AND THR-109</scope>
    <scope>CLEAVAGE OF INITIATOR METHIONINE [LARGE SCALE ANALYSIS]</scope>
    <scope>IDENTIFICATION BY MASS SPECTROMETRY [LARGE SCALE ANALYSIS]</scope>
</reference>
<reference key="26">
    <citation type="journal article" date="2012" name="Mol. Cell. Proteomics">
        <title>Comparative large-scale characterisation of plant vs. mammal proteins reveals similar and idiosyncratic N-alpha acetylation features.</title>
        <authorList>
            <person name="Bienvenut W.V."/>
            <person name="Sumpton D."/>
            <person name="Martinez A."/>
            <person name="Lilla S."/>
            <person name="Espagne C."/>
            <person name="Meinnel T."/>
            <person name="Giglione C."/>
        </authorList>
    </citation>
    <scope>ACETYLATION [LARGE SCALE ANALYSIS] AT ALA-2</scope>
    <scope>CLEAVAGE OF INITIATOR METHIONINE [LARGE SCALE ANALYSIS]</scope>
    <scope>IDENTIFICATION BY MASS SPECTROMETRY [LARGE SCALE ANALYSIS]</scope>
</reference>
<reference key="27">
    <citation type="journal article" date="2012" name="Proc. Natl. Acad. Sci. U.S.A.">
        <title>N-terminal acetylome analyses and functional insights of the N-terminal acetyltransferase NatB.</title>
        <authorList>
            <person name="Van Damme P."/>
            <person name="Lasa M."/>
            <person name="Polevoda B."/>
            <person name="Gazquez C."/>
            <person name="Elosegui-Artola A."/>
            <person name="Kim D.S."/>
            <person name="De Juan-Pardo E."/>
            <person name="Demeyer K."/>
            <person name="Hole K."/>
            <person name="Larrea E."/>
            <person name="Timmerman E."/>
            <person name="Prieto J."/>
            <person name="Arnesen T."/>
            <person name="Sherman F."/>
            <person name="Gevaert K."/>
            <person name="Aldabe R."/>
        </authorList>
    </citation>
    <scope>ACETYLATION [LARGE SCALE ANALYSIS] AT ALA-2</scope>
    <scope>CLEAVAGE OF INITIATOR METHIONINE [LARGE SCALE ANALYSIS]</scope>
    <scope>IDENTIFICATION BY MASS SPECTROMETRY [LARGE SCALE ANALYSIS]</scope>
</reference>
<reference key="28">
    <citation type="journal article" date="2013" name="J. Proteome Res.">
        <title>Toward a comprehensive characterization of a human cancer cell phosphoproteome.</title>
        <authorList>
            <person name="Zhou H."/>
            <person name="Di Palma S."/>
            <person name="Preisinger C."/>
            <person name="Peng M."/>
            <person name="Polat A.N."/>
            <person name="Heck A.J."/>
            <person name="Mohammed S."/>
        </authorList>
    </citation>
    <scope>PHOSPHORYLATION [LARGE SCALE ANALYSIS] AT SER-11; THR-109 AND SER-127</scope>
    <scope>IDENTIFICATION BY MASS SPECTROMETRY [LARGE SCALE ANALYSIS]</scope>
    <source>
        <tissue>Cervix carcinoma</tissue>
        <tissue>Erythroleukemia</tissue>
    </source>
</reference>
<reference key="29">
    <citation type="journal article" date="2014" name="J. Proteomics">
        <title>An enzyme assisted RP-RPLC approach for in-depth analysis of human liver phosphoproteome.</title>
        <authorList>
            <person name="Bian Y."/>
            <person name="Song C."/>
            <person name="Cheng K."/>
            <person name="Dong M."/>
            <person name="Wang F."/>
            <person name="Huang J."/>
            <person name="Sun D."/>
            <person name="Wang L."/>
            <person name="Ye M."/>
            <person name="Zou H."/>
        </authorList>
    </citation>
    <scope>IDENTIFICATION BY MASS SPECTROMETRY [LARGE SCALE ANALYSIS]</scope>
    <source>
        <tissue>Liver</tissue>
    </source>
</reference>
<reference key="30">
    <citation type="journal article" date="2015" name="Nature">
        <title>eIF3 targets cell-proliferation messenger RNAs for translational activation or repression.</title>
        <authorList>
            <person name="Lee A.S."/>
            <person name="Kranzusch P.J."/>
            <person name="Cate J.H."/>
        </authorList>
    </citation>
    <scope>FUNCTION OF THE EIF-3 COMPLEX</scope>
</reference>
<reference key="31">
    <citation type="journal article" date="2015" name="Proteomics">
        <title>N-terminome analysis of the human mitochondrial proteome.</title>
        <authorList>
            <person name="Vaca Jacome A.S."/>
            <person name="Rabilloud T."/>
            <person name="Schaeffer-Reiss C."/>
            <person name="Rompais M."/>
            <person name="Ayoub D."/>
            <person name="Lane L."/>
            <person name="Bairoch A."/>
            <person name="Van Dorsselaer A."/>
            <person name="Carapito C."/>
        </authorList>
    </citation>
    <scope>IDENTIFICATION BY MASS SPECTROMETRY [LARGE SCALE ANALYSIS]</scope>
</reference>
<reference key="32">
    <citation type="journal article" date="2016" name="Nature">
        <title>eIF3d is an mRNA cap-binding protein that is required for specialized translation initiation.</title>
        <authorList>
            <person name="Lee A.S."/>
            <person name="Kranzusch P.J."/>
            <person name="Doudna J.A."/>
            <person name="Cate J.H."/>
        </authorList>
    </citation>
    <scope>FUNCTION OF THE EIF-3 COMPLEX</scope>
</reference>
<reference key="33">
    <citation type="journal article" date="2017" name="Nat. Struct. Mol. Biol.">
        <title>Site-specific mapping of the human SUMO proteome reveals co-modification with phosphorylation.</title>
        <authorList>
            <person name="Hendriks I.A."/>
            <person name="Lyon D."/>
            <person name="Young C."/>
            <person name="Jensen L.J."/>
            <person name="Vertegaal A.C."/>
            <person name="Nielsen M.L."/>
        </authorList>
    </citation>
    <scope>SUMOYLATION [LARGE SCALE ANALYSIS] AT LYS-106</scope>
    <scope>IDENTIFICATION BY MASS SPECTROMETRY [LARGE SCALE ANALYSIS]</scope>
</reference>
<reference key="34">
    <citation type="journal article" date="2005" name="Science">
        <title>Structural roles for human translation factor eIF3 in initiation of protein synthesis.</title>
        <authorList>
            <person name="Siridechadilok B."/>
            <person name="Fraser C.S."/>
            <person name="Hall R.J."/>
            <person name="Doudna J.A."/>
            <person name="Nogales E."/>
        </authorList>
    </citation>
    <scope>3D-STRUCTURE MODELING</scope>
    <scope>ELECTRON MICROSCOPY</scope>
</reference>
<reference key="35">
    <citation type="submission" date="2008-01" db="PDB data bank">
        <title>Crystal structure of human translation initiation factor 3, subunit 1 alpha.</title>
        <authorList>
            <consortium name="Structural genomics consortium (SGC)"/>
        </authorList>
    </citation>
    <scope>X-RAY CRYSTALLOGRAPHY (1.85 ANGSTROMS) OF 141-220</scope>
</reference>
<gene>
    <name evidence="1" type="primary">EIF3J</name>
    <name evidence="1" type="synonym">EIF3S1</name>
    <name type="ORF">PRO0391</name>
</gene>
<keyword id="KW-0002">3D-structure</keyword>
<keyword id="KW-0007">Acetylation</keyword>
<keyword id="KW-0025">Alternative splicing</keyword>
<keyword id="KW-0175">Coiled coil</keyword>
<keyword id="KW-0963">Cytoplasm</keyword>
<keyword id="KW-0903">Direct protein sequencing</keyword>
<keyword id="KW-0396">Initiation factor</keyword>
<keyword id="KW-1017">Isopeptide bond</keyword>
<keyword id="KW-0597">Phosphoprotein</keyword>
<keyword id="KW-0648">Protein biosynthesis</keyword>
<keyword id="KW-1267">Proteomics identification</keyword>
<keyword id="KW-1185">Reference proteome</keyword>
<keyword id="KW-0832">Ubl conjugation</keyword>
<proteinExistence type="evidence at protein level"/>